<dbReference type="EC" id="3.6.5.n1" evidence="1"/>
<dbReference type="EMBL" id="CP001472">
    <property type="protein sequence ID" value="ACO33081.1"/>
    <property type="molecule type" value="Genomic_DNA"/>
</dbReference>
<dbReference type="RefSeq" id="WP_015897708.1">
    <property type="nucleotide sequence ID" value="NC_012483.1"/>
</dbReference>
<dbReference type="SMR" id="C1F2I3"/>
<dbReference type="FunCoup" id="C1F2I3">
    <property type="interactions" value="582"/>
</dbReference>
<dbReference type="STRING" id="240015.ACP_2643"/>
<dbReference type="KEGG" id="aca:ACP_2643"/>
<dbReference type="eggNOG" id="COG0481">
    <property type="taxonomic scope" value="Bacteria"/>
</dbReference>
<dbReference type="HOGENOM" id="CLU_009995_3_3_0"/>
<dbReference type="InParanoid" id="C1F2I3"/>
<dbReference type="OrthoDB" id="9804431at2"/>
<dbReference type="Proteomes" id="UP000002207">
    <property type="component" value="Chromosome"/>
</dbReference>
<dbReference type="GO" id="GO:0005886">
    <property type="term" value="C:plasma membrane"/>
    <property type="evidence" value="ECO:0007669"/>
    <property type="project" value="UniProtKB-SubCell"/>
</dbReference>
<dbReference type="GO" id="GO:0005525">
    <property type="term" value="F:GTP binding"/>
    <property type="evidence" value="ECO:0007669"/>
    <property type="project" value="UniProtKB-UniRule"/>
</dbReference>
<dbReference type="GO" id="GO:0003924">
    <property type="term" value="F:GTPase activity"/>
    <property type="evidence" value="ECO:0007669"/>
    <property type="project" value="UniProtKB-UniRule"/>
</dbReference>
<dbReference type="GO" id="GO:0043022">
    <property type="term" value="F:ribosome binding"/>
    <property type="evidence" value="ECO:0007669"/>
    <property type="project" value="UniProtKB-UniRule"/>
</dbReference>
<dbReference type="GO" id="GO:0003746">
    <property type="term" value="F:translation elongation factor activity"/>
    <property type="evidence" value="ECO:0007669"/>
    <property type="project" value="UniProtKB-UniRule"/>
</dbReference>
<dbReference type="GO" id="GO:0045727">
    <property type="term" value="P:positive regulation of translation"/>
    <property type="evidence" value="ECO:0007669"/>
    <property type="project" value="UniProtKB-UniRule"/>
</dbReference>
<dbReference type="CDD" id="cd03699">
    <property type="entry name" value="EF4_II"/>
    <property type="match status" value="1"/>
</dbReference>
<dbReference type="CDD" id="cd16260">
    <property type="entry name" value="EF4_III"/>
    <property type="match status" value="1"/>
</dbReference>
<dbReference type="CDD" id="cd01890">
    <property type="entry name" value="LepA"/>
    <property type="match status" value="1"/>
</dbReference>
<dbReference type="CDD" id="cd03709">
    <property type="entry name" value="lepA_C"/>
    <property type="match status" value="1"/>
</dbReference>
<dbReference type="FunFam" id="3.40.50.300:FF:000078">
    <property type="entry name" value="Elongation factor 4"/>
    <property type="match status" value="1"/>
</dbReference>
<dbReference type="FunFam" id="2.40.30.10:FF:000015">
    <property type="entry name" value="Translation factor GUF1, mitochondrial"/>
    <property type="match status" value="1"/>
</dbReference>
<dbReference type="FunFam" id="3.30.70.240:FF:000007">
    <property type="entry name" value="Translation factor GUF1, mitochondrial"/>
    <property type="match status" value="1"/>
</dbReference>
<dbReference type="FunFam" id="3.30.70.2570:FF:000001">
    <property type="entry name" value="Translation factor GUF1, mitochondrial"/>
    <property type="match status" value="1"/>
</dbReference>
<dbReference type="FunFam" id="3.30.70.870:FF:000004">
    <property type="entry name" value="Translation factor GUF1, mitochondrial"/>
    <property type="match status" value="1"/>
</dbReference>
<dbReference type="Gene3D" id="3.30.70.240">
    <property type="match status" value="1"/>
</dbReference>
<dbReference type="Gene3D" id="3.30.70.2570">
    <property type="entry name" value="Elongation factor 4, C-terminal domain"/>
    <property type="match status" value="1"/>
</dbReference>
<dbReference type="Gene3D" id="3.30.70.870">
    <property type="entry name" value="Elongation Factor G (Translational Gtpase), domain 3"/>
    <property type="match status" value="1"/>
</dbReference>
<dbReference type="Gene3D" id="3.40.50.300">
    <property type="entry name" value="P-loop containing nucleotide triphosphate hydrolases"/>
    <property type="match status" value="1"/>
</dbReference>
<dbReference type="Gene3D" id="2.40.30.10">
    <property type="entry name" value="Translation factors"/>
    <property type="match status" value="1"/>
</dbReference>
<dbReference type="HAMAP" id="MF_00071">
    <property type="entry name" value="LepA"/>
    <property type="match status" value="1"/>
</dbReference>
<dbReference type="InterPro" id="IPR006297">
    <property type="entry name" value="EF-4"/>
</dbReference>
<dbReference type="InterPro" id="IPR035647">
    <property type="entry name" value="EFG_III/V"/>
</dbReference>
<dbReference type="InterPro" id="IPR000640">
    <property type="entry name" value="EFG_V-like"/>
</dbReference>
<dbReference type="InterPro" id="IPR004161">
    <property type="entry name" value="EFTu-like_2"/>
</dbReference>
<dbReference type="InterPro" id="IPR038363">
    <property type="entry name" value="LepA_C_sf"/>
</dbReference>
<dbReference type="InterPro" id="IPR013842">
    <property type="entry name" value="LepA_CTD"/>
</dbReference>
<dbReference type="InterPro" id="IPR035654">
    <property type="entry name" value="LepA_IV"/>
</dbReference>
<dbReference type="InterPro" id="IPR027417">
    <property type="entry name" value="P-loop_NTPase"/>
</dbReference>
<dbReference type="InterPro" id="IPR005225">
    <property type="entry name" value="Small_GTP-bd"/>
</dbReference>
<dbReference type="InterPro" id="IPR000795">
    <property type="entry name" value="T_Tr_GTP-bd_dom"/>
</dbReference>
<dbReference type="InterPro" id="IPR009000">
    <property type="entry name" value="Transl_B-barrel_sf"/>
</dbReference>
<dbReference type="NCBIfam" id="TIGR01393">
    <property type="entry name" value="lepA"/>
    <property type="match status" value="1"/>
</dbReference>
<dbReference type="NCBIfam" id="TIGR00231">
    <property type="entry name" value="small_GTP"/>
    <property type="match status" value="1"/>
</dbReference>
<dbReference type="PANTHER" id="PTHR43512:SF4">
    <property type="entry name" value="TRANSLATION FACTOR GUF1 HOMOLOG, CHLOROPLASTIC"/>
    <property type="match status" value="1"/>
</dbReference>
<dbReference type="PANTHER" id="PTHR43512">
    <property type="entry name" value="TRANSLATION FACTOR GUF1-RELATED"/>
    <property type="match status" value="1"/>
</dbReference>
<dbReference type="Pfam" id="PF00679">
    <property type="entry name" value="EFG_C"/>
    <property type="match status" value="1"/>
</dbReference>
<dbReference type="Pfam" id="PF00009">
    <property type="entry name" value="GTP_EFTU"/>
    <property type="match status" value="1"/>
</dbReference>
<dbReference type="Pfam" id="PF03144">
    <property type="entry name" value="GTP_EFTU_D2"/>
    <property type="match status" value="1"/>
</dbReference>
<dbReference type="Pfam" id="PF06421">
    <property type="entry name" value="LepA_C"/>
    <property type="match status" value="1"/>
</dbReference>
<dbReference type="PRINTS" id="PR00315">
    <property type="entry name" value="ELONGATNFCT"/>
</dbReference>
<dbReference type="SUPFAM" id="SSF54980">
    <property type="entry name" value="EF-G C-terminal domain-like"/>
    <property type="match status" value="2"/>
</dbReference>
<dbReference type="SUPFAM" id="SSF52540">
    <property type="entry name" value="P-loop containing nucleoside triphosphate hydrolases"/>
    <property type="match status" value="1"/>
</dbReference>
<dbReference type="SUPFAM" id="SSF50447">
    <property type="entry name" value="Translation proteins"/>
    <property type="match status" value="1"/>
</dbReference>
<dbReference type="PROSITE" id="PS51722">
    <property type="entry name" value="G_TR_2"/>
    <property type="match status" value="1"/>
</dbReference>
<feature type="chain" id="PRO_1000118028" description="Elongation factor 4">
    <location>
        <begin position="1"/>
        <end position="605"/>
    </location>
</feature>
<feature type="domain" description="tr-type G">
    <location>
        <begin position="4"/>
        <end position="186"/>
    </location>
</feature>
<feature type="binding site" evidence="1">
    <location>
        <begin position="16"/>
        <end position="21"/>
    </location>
    <ligand>
        <name>GTP</name>
        <dbReference type="ChEBI" id="CHEBI:37565"/>
    </ligand>
</feature>
<feature type="binding site" evidence="1">
    <location>
        <begin position="133"/>
        <end position="136"/>
    </location>
    <ligand>
        <name>GTP</name>
        <dbReference type="ChEBI" id="CHEBI:37565"/>
    </ligand>
</feature>
<keyword id="KW-0997">Cell inner membrane</keyword>
<keyword id="KW-1003">Cell membrane</keyword>
<keyword id="KW-0342">GTP-binding</keyword>
<keyword id="KW-0378">Hydrolase</keyword>
<keyword id="KW-0472">Membrane</keyword>
<keyword id="KW-0547">Nucleotide-binding</keyword>
<keyword id="KW-0648">Protein biosynthesis</keyword>
<keyword id="KW-1185">Reference proteome</keyword>
<name>LEPA_ACIC5</name>
<accession>C1F2I3</accession>
<evidence type="ECO:0000255" key="1">
    <source>
        <dbReference type="HAMAP-Rule" id="MF_00071"/>
    </source>
</evidence>
<sequence>MDSKYIRNFAIIAHIDHGKSTLSDRLLEMTGSLTAREMQAQVLDAMDLERERGITIKAHAVRMLYKAKDGETYQLNLIDTPGHVDFSYEVSRSLASCEGALLIVDASQGVEAQTLANAYLAINNGLEIIPVINKIDLPSADITRTQEMIEQAVGLDATDAIPVSAKTGVGVPDVLEAIVKRLPPPTGDPNAPLQALIFDSWFDAYRGVIVLARVMNGTLRKGMRIRLMSNGKVFDVESMGVLTPKPMEIGELSAGEVGFFVATIKTVSDTKIGDTVTEDARPAAEPLAGFEDIKSMVFAGIYTVDSHEHTLLRDALEKLRLNDSSFFFEPESSVALGFGFRCGFLGLLHMEIIQERLEREFDLDLITTAPGVRYKITMTDGSTLEVDNPSRWPDPSEIEQVEEPVIRATILTNEEYVGGILKLVEEKRGRQQNFEYVTPTRVMLTYELPLNEIVLDFYDRLKSVSRGYASLDYQLAGTWVSPMVKMDILVSGEPVDALSIIVHRDFAYERGRALVSKMRELIPRQQFEVAIQAAIGSKIIARETVAALRKNVIAKCYGGDISRKRKLLEKQKEGKKRMKRIGKVDIPQEAFLAVLKVGEDSASKN</sequence>
<proteinExistence type="inferred from homology"/>
<gene>
    <name evidence="1" type="primary">lepA</name>
    <name type="ordered locus">ACP_2643</name>
</gene>
<reference key="1">
    <citation type="journal article" date="2009" name="Appl. Environ. Microbiol.">
        <title>Three genomes from the phylum Acidobacteria provide insight into the lifestyles of these microorganisms in soils.</title>
        <authorList>
            <person name="Ward N.L."/>
            <person name="Challacombe J.F."/>
            <person name="Janssen P.H."/>
            <person name="Henrissat B."/>
            <person name="Coutinho P.M."/>
            <person name="Wu M."/>
            <person name="Xie G."/>
            <person name="Haft D.H."/>
            <person name="Sait M."/>
            <person name="Badger J."/>
            <person name="Barabote R.D."/>
            <person name="Bradley B."/>
            <person name="Brettin T.S."/>
            <person name="Brinkac L.M."/>
            <person name="Bruce D."/>
            <person name="Creasy T."/>
            <person name="Daugherty S.C."/>
            <person name="Davidsen T.M."/>
            <person name="DeBoy R.T."/>
            <person name="Detter J.C."/>
            <person name="Dodson R.J."/>
            <person name="Durkin A.S."/>
            <person name="Ganapathy A."/>
            <person name="Gwinn-Giglio M."/>
            <person name="Han C.S."/>
            <person name="Khouri H."/>
            <person name="Kiss H."/>
            <person name="Kothari S.P."/>
            <person name="Madupu R."/>
            <person name="Nelson K.E."/>
            <person name="Nelson W.C."/>
            <person name="Paulsen I."/>
            <person name="Penn K."/>
            <person name="Ren Q."/>
            <person name="Rosovitz M.J."/>
            <person name="Selengut J.D."/>
            <person name="Shrivastava S."/>
            <person name="Sullivan S.A."/>
            <person name="Tapia R."/>
            <person name="Thompson L.S."/>
            <person name="Watkins K.L."/>
            <person name="Yang Q."/>
            <person name="Yu C."/>
            <person name="Zafar N."/>
            <person name="Zhou L."/>
            <person name="Kuske C.R."/>
        </authorList>
    </citation>
    <scope>NUCLEOTIDE SEQUENCE [LARGE SCALE GENOMIC DNA]</scope>
    <source>
        <strain>ATCC 51196 / DSM 11244 / BCRC 80197 / JCM 7670 / NBRC 15755 / NCIMB 13165 / 161</strain>
    </source>
</reference>
<comment type="function">
    <text evidence="1">Required for accurate and efficient protein synthesis under certain stress conditions. May act as a fidelity factor of the translation reaction, by catalyzing a one-codon backward translocation of tRNAs on improperly translocated ribosomes. Back-translocation proceeds from a post-translocation (POST) complex to a pre-translocation (PRE) complex, thus giving elongation factor G a second chance to translocate the tRNAs correctly. Binds to ribosomes in a GTP-dependent manner.</text>
</comment>
<comment type="catalytic activity">
    <reaction evidence="1">
        <text>GTP + H2O = GDP + phosphate + H(+)</text>
        <dbReference type="Rhea" id="RHEA:19669"/>
        <dbReference type="ChEBI" id="CHEBI:15377"/>
        <dbReference type="ChEBI" id="CHEBI:15378"/>
        <dbReference type="ChEBI" id="CHEBI:37565"/>
        <dbReference type="ChEBI" id="CHEBI:43474"/>
        <dbReference type="ChEBI" id="CHEBI:58189"/>
        <dbReference type="EC" id="3.6.5.n1"/>
    </reaction>
</comment>
<comment type="subcellular location">
    <subcellularLocation>
        <location evidence="1">Cell inner membrane</location>
        <topology evidence="1">Peripheral membrane protein</topology>
        <orientation evidence="1">Cytoplasmic side</orientation>
    </subcellularLocation>
</comment>
<comment type="similarity">
    <text evidence="1">Belongs to the TRAFAC class translation factor GTPase superfamily. Classic translation factor GTPase family. LepA subfamily.</text>
</comment>
<protein>
    <recommendedName>
        <fullName evidence="1">Elongation factor 4</fullName>
        <shortName evidence="1">EF-4</shortName>
        <ecNumber evidence="1">3.6.5.n1</ecNumber>
    </recommendedName>
    <alternativeName>
        <fullName evidence="1">Ribosomal back-translocase LepA</fullName>
    </alternativeName>
</protein>
<organism>
    <name type="scientific">Acidobacterium capsulatum (strain ATCC 51196 / DSM 11244 / BCRC 80197 / JCM 7670 / NBRC 15755 / NCIMB 13165 / 161)</name>
    <dbReference type="NCBI Taxonomy" id="240015"/>
    <lineage>
        <taxon>Bacteria</taxon>
        <taxon>Pseudomonadati</taxon>
        <taxon>Acidobacteriota</taxon>
        <taxon>Terriglobia</taxon>
        <taxon>Terriglobales</taxon>
        <taxon>Acidobacteriaceae</taxon>
        <taxon>Acidobacterium</taxon>
    </lineage>
</organism>